<gene>
    <name type="primary">Cdk5rap1</name>
</gene>
<reference key="1">
    <citation type="journal article" date="2000" name="Gene">
        <title>Cloning of three novel neuronal Cdk5 activator binding proteins.</title>
        <authorList>
            <person name="Ching Y.-P."/>
            <person name="Qi Z."/>
            <person name="Wang J.H."/>
        </authorList>
    </citation>
    <scope>NUCLEOTIDE SEQUENCE [MRNA]</scope>
    <scope>INTERACTION WITH CDK5R1</scope>
    <source>
        <tissue>Brain</tissue>
    </source>
</reference>
<reference key="2">
    <citation type="journal article" date="2004" name="Genome Res.">
        <title>The status, quality, and expansion of the NIH full-length cDNA project: the Mammalian Gene Collection (MGC).</title>
        <authorList>
            <consortium name="The MGC Project Team"/>
        </authorList>
    </citation>
    <scope>NUCLEOTIDE SEQUENCE [LARGE SCALE MRNA]</scope>
    <source>
        <tissue>Prostate</tissue>
    </source>
</reference>
<proteinExistence type="evidence at protein level"/>
<feature type="transit peptide" description="Mitochondrion" evidence="3">
    <location>
        <begin position="1"/>
        <end position="30"/>
    </location>
</feature>
<feature type="chain" id="PRO_0000141766" description="Mitochondrial tRNA methylthiotransferase CDK5RAP1" evidence="3">
    <location>
        <begin position="31"/>
        <end position="586"/>
    </location>
</feature>
<feature type="domain" description="MTTase N-terminal" evidence="5">
    <location>
        <begin position="97"/>
        <end position="217"/>
    </location>
</feature>
<feature type="domain" description="Radical SAM core" evidence="6">
    <location>
        <begin position="241"/>
        <end position="495"/>
    </location>
</feature>
<feature type="domain" description="TRAM" evidence="4">
    <location>
        <begin position="498"/>
        <end position="573"/>
    </location>
</feature>
<feature type="region of interest" description="Disordered" evidence="7">
    <location>
        <begin position="68"/>
        <end position="90"/>
    </location>
</feature>
<feature type="binding site" evidence="5">
    <location>
        <position position="106"/>
    </location>
    <ligand>
        <name>[4Fe-4S] cluster</name>
        <dbReference type="ChEBI" id="CHEBI:49883"/>
        <label>1</label>
    </ligand>
</feature>
<feature type="binding site" evidence="5">
    <location>
        <position position="142"/>
    </location>
    <ligand>
        <name>[4Fe-4S] cluster</name>
        <dbReference type="ChEBI" id="CHEBI:49883"/>
        <label>1</label>
    </ligand>
</feature>
<feature type="binding site" evidence="5">
    <location>
        <position position="180"/>
    </location>
    <ligand>
        <name>[4Fe-4S] cluster</name>
        <dbReference type="ChEBI" id="CHEBI:49883"/>
        <label>1</label>
    </ligand>
</feature>
<feature type="binding site" evidence="2">
    <location>
        <position position="255"/>
    </location>
    <ligand>
        <name>[4Fe-4S] cluster</name>
        <dbReference type="ChEBI" id="CHEBI:49883"/>
        <label>2</label>
        <note>4Fe-4S-S-AdoMet</note>
    </ligand>
</feature>
<feature type="binding site" evidence="2">
    <location>
        <position position="259"/>
    </location>
    <ligand>
        <name>[4Fe-4S] cluster</name>
        <dbReference type="ChEBI" id="CHEBI:49883"/>
        <label>2</label>
        <note>4Fe-4S-S-AdoMet</note>
    </ligand>
</feature>
<feature type="binding site" evidence="2">
    <location>
        <position position="262"/>
    </location>
    <ligand>
        <name>[4Fe-4S] cluster</name>
        <dbReference type="ChEBI" id="CHEBI:49883"/>
        <label>2</label>
        <note>4Fe-4S-S-AdoMet</note>
    </ligand>
</feature>
<sequence>MHPLQRVFRAQRLSAPLTSMCWVLLRTFRAHNSTSCPDPEGKSSEGVQKDFSSRLATGPTFQHFLRSASVPQEKPSSPEVEDPPPYLSGDELLGRQRKVYLETYGCQMNVNDTEIAWSILQKSGYLRTSNLQEADVILLVTCSIREKAEQTIWNRLHQLKVLKAKRPRSRVPLRIGILGCMAERLKGEILNREKMVDLLAGPDAYRDLPRLLAVVESGQQAANVLLSLDETYADIMPVQTSPSATSAFVSIMRGCDNMCSYCIVPFTRGRERSRPVASILDEVRKLSEQGLKEVTLLGQNVNSFRDNSEVQFSSTGSANLSRGFTTNYKPKQGGLRFSHLLDQVSRIDPEMRIRFTSPHPKDFPDEVLQLIRERHNICKQIHLPAQSGSSRVLEAMRRGYSREAYVALVHHIREAIPGVGLSSDFITGFCGETEDDHLQTVSLLREVQYNTGFLFAYSMRQKTRAYHRLKDDVPEEVKLRRLEELITVFREEASKVNATSVGCTQLVLVEGFSKRSTTDLCGRNDANLKVIFPDAEVEDITDPGLKVRAQPGDYVLVKIISASSQTLKGHILCRTTMKDSSMNCLT</sequence>
<name>CK5P1_RAT</name>
<protein>
    <recommendedName>
        <fullName>Mitochondrial tRNA methylthiotransferase CDK5RAP1</fullName>
        <ecNumber evidence="1">2.8.4.3</ecNumber>
    </recommendedName>
    <alternativeName>
        <fullName>CDK5 activator-binding protein C42</fullName>
    </alternativeName>
    <alternativeName>
        <fullName>CDK5 regulatory subunit-associated protein 1</fullName>
    </alternativeName>
    <alternativeName>
        <fullName>mt-tRNA-2-methylthio-N6-dimethylallyladenosine synthase</fullName>
    </alternativeName>
    <alternativeName>
        <fullName>mt-tRNA-N6-(dimethylallyl)adenosine(37) methylthiotransferase</fullName>
    </alternativeName>
</protein>
<accession>Q9JLH6</accession>
<evidence type="ECO:0000250" key="1">
    <source>
        <dbReference type="UniProtKB" id="Q96SZ6"/>
    </source>
</evidence>
<evidence type="ECO:0000250" key="2">
    <source>
        <dbReference type="UniProtKB" id="Q9X2H6"/>
    </source>
</evidence>
<evidence type="ECO:0000255" key="3"/>
<evidence type="ECO:0000255" key="4">
    <source>
        <dbReference type="PROSITE-ProRule" id="PRU00208"/>
    </source>
</evidence>
<evidence type="ECO:0000255" key="5">
    <source>
        <dbReference type="PROSITE-ProRule" id="PRU00780"/>
    </source>
</evidence>
<evidence type="ECO:0000255" key="6">
    <source>
        <dbReference type="PROSITE-ProRule" id="PRU01266"/>
    </source>
</evidence>
<evidence type="ECO:0000256" key="7">
    <source>
        <dbReference type="SAM" id="MobiDB-lite"/>
    </source>
</evidence>
<evidence type="ECO:0000269" key="8">
    <source>
    </source>
</evidence>
<evidence type="ECO:0000305" key="9"/>
<organism>
    <name type="scientific">Rattus norvegicus</name>
    <name type="common">Rat</name>
    <dbReference type="NCBI Taxonomy" id="10116"/>
    <lineage>
        <taxon>Eukaryota</taxon>
        <taxon>Metazoa</taxon>
        <taxon>Chordata</taxon>
        <taxon>Craniata</taxon>
        <taxon>Vertebrata</taxon>
        <taxon>Euteleostomi</taxon>
        <taxon>Mammalia</taxon>
        <taxon>Eutheria</taxon>
        <taxon>Euarchontoglires</taxon>
        <taxon>Glires</taxon>
        <taxon>Rodentia</taxon>
        <taxon>Myomorpha</taxon>
        <taxon>Muroidea</taxon>
        <taxon>Muridae</taxon>
        <taxon>Murinae</taxon>
        <taxon>Rattus</taxon>
    </lineage>
</organism>
<dbReference type="EC" id="2.8.4.3" evidence="1"/>
<dbReference type="EMBL" id="AF177477">
    <property type="protein sequence ID" value="AAF60223.1"/>
    <property type="molecule type" value="mRNA"/>
</dbReference>
<dbReference type="EMBL" id="BC066666">
    <property type="protein sequence ID" value="AAH66666.1"/>
    <property type="molecule type" value="mRNA"/>
</dbReference>
<dbReference type="RefSeq" id="NP_663773.1">
    <property type="nucleotide sequence ID" value="NM_145721.2"/>
</dbReference>
<dbReference type="RefSeq" id="XP_006235369.1">
    <property type="nucleotide sequence ID" value="XM_006235307.2"/>
</dbReference>
<dbReference type="RefSeq" id="XP_063139211.1">
    <property type="nucleotide sequence ID" value="XM_063283141.1"/>
</dbReference>
<dbReference type="SMR" id="Q9JLH6"/>
<dbReference type="BioGRID" id="251627">
    <property type="interactions" value="1"/>
</dbReference>
<dbReference type="FunCoup" id="Q9JLH6">
    <property type="interactions" value="2228"/>
</dbReference>
<dbReference type="IntAct" id="Q9JLH6">
    <property type="interactions" value="2"/>
</dbReference>
<dbReference type="STRING" id="10116.ENSRNOP00000021418"/>
<dbReference type="PhosphoSitePlus" id="Q9JLH6"/>
<dbReference type="PaxDb" id="10116-ENSRNOP00000021418"/>
<dbReference type="GeneID" id="252827"/>
<dbReference type="KEGG" id="rno:252827"/>
<dbReference type="AGR" id="RGD:708387"/>
<dbReference type="CTD" id="51654"/>
<dbReference type="RGD" id="708387">
    <property type="gene designation" value="Cdk5rap1"/>
</dbReference>
<dbReference type="eggNOG" id="KOG2492">
    <property type="taxonomic scope" value="Eukaryota"/>
</dbReference>
<dbReference type="HOGENOM" id="CLU_018697_2_1_1"/>
<dbReference type="InParanoid" id="Q9JLH6"/>
<dbReference type="OrthoDB" id="190098at2759"/>
<dbReference type="PhylomeDB" id="Q9JLH6"/>
<dbReference type="TreeFam" id="TF101033"/>
<dbReference type="PRO" id="PR:Q9JLH6"/>
<dbReference type="Proteomes" id="UP000002494">
    <property type="component" value="Chromosome 3"/>
</dbReference>
<dbReference type="Bgee" id="ENSRNOG00000015696">
    <property type="expression patterns" value="Expressed in quadriceps femoris and 19 other cell types or tissues"/>
</dbReference>
<dbReference type="GO" id="GO:0005829">
    <property type="term" value="C:cytosol"/>
    <property type="evidence" value="ECO:0000266"/>
    <property type="project" value="RGD"/>
</dbReference>
<dbReference type="GO" id="GO:0005743">
    <property type="term" value="C:mitochondrial inner membrane"/>
    <property type="evidence" value="ECO:0007669"/>
    <property type="project" value="UniProtKB-SubCell"/>
</dbReference>
<dbReference type="GO" id="GO:0005759">
    <property type="term" value="C:mitochondrial matrix"/>
    <property type="evidence" value="ECO:0000266"/>
    <property type="project" value="RGD"/>
</dbReference>
<dbReference type="GO" id="GO:0005739">
    <property type="term" value="C:mitochondrion"/>
    <property type="evidence" value="ECO:0000266"/>
    <property type="project" value="RGD"/>
</dbReference>
<dbReference type="GO" id="GO:0005654">
    <property type="term" value="C:nucleoplasm"/>
    <property type="evidence" value="ECO:0000266"/>
    <property type="project" value="RGD"/>
</dbReference>
<dbReference type="GO" id="GO:0051539">
    <property type="term" value="F:4 iron, 4 sulfur cluster binding"/>
    <property type="evidence" value="ECO:0007669"/>
    <property type="project" value="UniProtKB-KW"/>
</dbReference>
<dbReference type="GO" id="GO:0046872">
    <property type="term" value="F:metal ion binding"/>
    <property type="evidence" value="ECO:0007669"/>
    <property type="project" value="UniProtKB-KW"/>
</dbReference>
<dbReference type="GO" id="GO:0035597">
    <property type="term" value="F:N6-isopentenyladenosine methylthiotransferase activity"/>
    <property type="evidence" value="ECO:0000266"/>
    <property type="project" value="RGD"/>
</dbReference>
<dbReference type="GO" id="GO:0044877">
    <property type="term" value="F:protein-containing complex binding"/>
    <property type="evidence" value="ECO:0000314"/>
    <property type="project" value="RGD"/>
</dbReference>
<dbReference type="GO" id="GO:0070900">
    <property type="term" value="P:mitochondrial tRNA modification"/>
    <property type="evidence" value="ECO:0000266"/>
    <property type="project" value="RGD"/>
</dbReference>
<dbReference type="GO" id="GO:0045736">
    <property type="term" value="P:negative regulation of cyclin-dependent protein serine/threonine kinase activity"/>
    <property type="evidence" value="ECO:0000250"/>
    <property type="project" value="UniProtKB"/>
</dbReference>
<dbReference type="GO" id="GO:0070131">
    <property type="term" value="P:positive regulation of mitochondrial translation"/>
    <property type="evidence" value="ECO:0000266"/>
    <property type="project" value="RGD"/>
</dbReference>
<dbReference type="GO" id="GO:0045903">
    <property type="term" value="P:positive regulation of translational fidelity"/>
    <property type="evidence" value="ECO:0000266"/>
    <property type="project" value="RGD"/>
</dbReference>
<dbReference type="GO" id="GO:0000079">
    <property type="term" value="P:regulation of cyclin-dependent protein serine/threonine kinase activity"/>
    <property type="evidence" value="ECO:0000314"/>
    <property type="project" value="UniProtKB"/>
</dbReference>
<dbReference type="GO" id="GO:0009451">
    <property type="term" value="P:RNA modification"/>
    <property type="evidence" value="ECO:0000266"/>
    <property type="project" value="RGD"/>
</dbReference>
<dbReference type="FunFam" id="3.40.50.12160:FF:000003">
    <property type="entry name" value="CDK5 regulatory subunit-associated protein 1"/>
    <property type="match status" value="1"/>
</dbReference>
<dbReference type="FunFam" id="3.80.30.20:FF:000003">
    <property type="entry name" value="CDK5 regulatory subunit-associated protein 1"/>
    <property type="match status" value="1"/>
</dbReference>
<dbReference type="Gene3D" id="3.40.50.12160">
    <property type="entry name" value="Methylthiotransferase, N-terminal domain"/>
    <property type="match status" value="1"/>
</dbReference>
<dbReference type="Gene3D" id="3.80.30.20">
    <property type="entry name" value="tm_1862 like domain"/>
    <property type="match status" value="1"/>
</dbReference>
<dbReference type="HAMAP" id="MF_01864">
    <property type="entry name" value="tRNA_metthiotr_MiaB"/>
    <property type="match status" value="1"/>
</dbReference>
<dbReference type="InterPro" id="IPR006638">
    <property type="entry name" value="Elp3/MiaA/NifB-like_rSAM"/>
</dbReference>
<dbReference type="InterPro" id="IPR005839">
    <property type="entry name" value="Methylthiotransferase"/>
</dbReference>
<dbReference type="InterPro" id="IPR020612">
    <property type="entry name" value="Methylthiotransferase_CS"/>
</dbReference>
<dbReference type="InterPro" id="IPR013848">
    <property type="entry name" value="Methylthiotransferase_N"/>
</dbReference>
<dbReference type="InterPro" id="IPR038135">
    <property type="entry name" value="Methylthiotransferase_N_sf"/>
</dbReference>
<dbReference type="InterPro" id="IPR006463">
    <property type="entry name" value="MiaB_methiolase"/>
</dbReference>
<dbReference type="InterPro" id="IPR007197">
    <property type="entry name" value="rSAM"/>
</dbReference>
<dbReference type="InterPro" id="IPR023404">
    <property type="entry name" value="rSAM_horseshoe"/>
</dbReference>
<dbReference type="InterPro" id="IPR002792">
    <property type="entry name" value="TRAM_dom"/>
</dbReference>
<dbReference type="NCBIfam" id="TIGR01574">
    <property type="entry name" value="miaB-methiolase"/>
    <property type="match status" value="1"/>
</dbReference>
<dbReference type="NCBIfam" id="TIGR00089">
    <property type="entry name" value="MiaB/RimO family radical SAM methylthiotransferase"/>
    <property type="match status" value="1"/>
</dbReference>
<dbReference type="PANTHER" id="PTHR43020">
    <property type="entry name" value="CDK5 REGULATORY SUBUNIT-ASSOCIATED PROTEIN 1"/>
    <property type="match status" value="1"/>
</dbReference>
<dbReference type="PANTHER" id="PTHR43020:SF2">
    <property type="entry name" value="MITOCHONDRIAL TRNA METHYLTHIOTRANSFERASE CDK5RAP1"/>
    <property type="match status" value="1"/>
</dbReference>
<dbReference type="Pfam" id="PF04055">
    <property type="entry name" value="Radical_SAM"/>
    <property type="match status" value="1"/>
</dbReference>
<dbReference type="Pfam" id="PF01938">
    <property type="entry name" value="TRAM"/>
    <property type="match status" value="1"/>
</dbReference>
<dbReference type="Pfam" id="PF00919">
    <property type="entry name" value="UPF0004"/>
    <property type="match status" value="1"/>
</dbReference>
<dbReference type="SFLD" id="SFLDF00273">
    <property type="entry name" value="(dimethylallyl)adenosine_tRNA"/>
    <property type="match status" value="1"/>
</dbReference>
<dbReference type="SFLD" id="SFLDG01082">
    <property type="entry name" value="B12-binding_domain_containing"/>
    <property type="match status" value="1"/>
</dbReference>
<dbReference type="SFLD" id="SFLDF00413">
    <property type="entry name" value="CDK5RAP1"/>
    <property type="match status" value="1"/>
</dbReference>
<dbReference type="SFLD" id="SFLDS00029">
    <property type="entry name" value="Radical_SAM"/>
    <property type="match status" value="1"/>
</dbReference>
<dbReference type="SMART" id="SM00729">
    <property type="entry name" value="Elp3"/>
    <property type="match status" value="1"/>
</dbReference>
<dbReference type="SUPFAM" id="SSF102114">
    <property type="entry name" value="Radical SAM enzymes"/>
    <property type="match status" value="1"/>
</dbReference>
<dbReference type="PROSITE" id="PS51449">
    <property type="entry name" value="MTTASE_N"/>
    <property type="match status" value="1"/>
</dbReference>
<dbReference type="PROSITE" id="PS01278">
    <property type="entry name" value="MTTASE_RADICAL"/>
    <property type="match status" value="1"/>
</dbReference>
<dbReference type="PROSITE" id="PS51918">
    <property type="entry name" value="RADICAL_SAM"/>
    <property type="match status" value="1"/>
</dbReference>
<dbReference type="PROSITE" id="PS50926">
    <property type="entry name" value="TRAM"/>
    <property type="match status" value="1"/>
</dbReference>
<comment type="function">
    <text evidence="1">Methylthiotransferase that catalyzes the conversion of N6-(dimethylallyl)adenosine (i(6)A) to 2-methylthio-N6-(dimethylallyl)adenosine (ms(2)i(6)A) at position 37 (adjacent to the 3'-end of the anticodon) of four mitochondrial DNA-encoded tRNAs (Ser(UCN), Phe, Tyr and Trp) (By similarity). Essential for efficient and highly accurate protein translation by the ribosome (By similarity). Specifically inhibits CDK5 activation by CDK5R1 (By similarity). Essential for efficient mitochondrial protein synthesis and respiratory chain (By similarity).</text>
</comment>
<comment type="catalytic activity">
    <reaction evidence="1">
        <text>N(6)-dimethylallyladenosine(37) in tRNA + (sulfur carrier)-SH + AH2 + 2 S-adenosyl-L-methionine = 2-methylsulfanyl-N(6)-dimethylallyladenosine(37) in tRNA + (sulfur carrier)-H + 5'-deoxyadenosine + L-methionine + A + S-adenosyl-L-homocysteine + 2 H(+)</text>
        <dbReference type="Rhea" id="RHEA:37067"/>
        <dbReference type="Rhea" id="RHEA-COMP:10375"/>
        <dbReference type="Rhea" id="RHEA-COMP:10376"/>
        <dbReference type="Rhea" id="RHEA-COMP:14737"/>
        <dbReference type="Rhea" id="RHEA-COMP:14739"/>
        <dbReference type="ChEBI" id="CHEBI:13193"/>
        <dbReference type="ChEBI" id="CHEBI:15378"/>
        <dbReference type="ChEBI" id="CHEBI:17319"/>
        <dbReference type="ChEBI" id="CHEBI:17499"/>
        <dbReference type="ChEBI" id="CHEBI:29917"/>
        <dbReference type="ChEBI" id="CHEBI:57844"/>
        <dbReference type="ChEBI" id="CHEBI:57856"/>
        <dbReference type="ChEBI" id="CHEBI:59789"/>
        <dbReference type="ChEBI" id="CHEBI:64428"/>
        <dbReference type="ChEBI" id="CHEBI:74415"/>
        <dbReference type="ChEBI" id="CHEBI:74417"/>
        <dbReference type="EC" id="2.8.4.3"/>
    </reaction>
    <physiologicalReaction direction="left-to-right" evidence="1">
        <dbReference type="Rhea" id="RHEA:37068"/>
    </physiologicalReaction>
</comment>
<comment type="cofactor">
    <cofactor evidence="5">
        <name>[4Fe-4S] cluster</name>
        <dbReference type="ChEBI" id="CHEBI:49883"/>
    </cofactor>
    <text evidence="5">Binds 2 [4Fe-4S] clusters. One cluster is coordinated with 3 cysteines and an exchangeable S-adenosyl-L-methionine.</text>
</comment>
<comment type="subunit">
    <text evidence="1 8">Interacts with CDK5R1 (p35 form) (PubMed:10721722). CDK5RAP1, CDK5RAP2 and CDK5RAP3 show competitive binding to CDK5R1 (By similarity). Forms a complex with CDK5R1 and CDK5 (By similarity).</text>
</comment>
<comment type="subcellular location">
    <subcellularLocation>
        <location evidence="1">Mitochondrion inner membrane</location>
    </subcellularLocation>
</comment>
<comment type="tissue specificity">
    <text evidence="8">Expressed in brain.</text>
</comment>
<comment type="similarity">
    <text evidence="9">Belongs to the methylthiotransferase family. MiaB subfamily.</text>
</comment>
<keyword id="KW-0004">4Fe-4S</keyword>
<keyword id="KW-0408">Iron</keyword>
<keyword id="KW-0411">Iron-sulfur</keyword>
<keyword id="KW-0472">Membrane</keyword>
<keyword id="KW-0479">Metal-binding</keyword>
<keyword id="KW-0496">Mitochondrion</keyword>
<keyword id="KW-0999">Mitochondrion inner membrane</keyword>
<keyword id="KW-1185">Reference proteome</keyword>
<keyword id="KW-0949">S-adenosyl-L-methionine</keyword>
<keyword id="KW-0808">Transferase</keyword>
<keyword id="KW-0809">Transit peptide</keyword>
<keyword id="KW-0819">tRNA processing</keyword>